<proteinExistence type="evidence at transcript level"/>
<name>O3611_CONPE</name>
<reference key="1">
    <citation type="journal article" date="2001" name="Mol. Biol. Evol.">
        <title>Mechanisms for evolving hypervariability: the case of conopeptides.</title>
        <authorList>
            <person name="Conticello S.G."/>
            <person name="Gilad Y."/>
            <person name="Avidan N."/>
            <person name="Ben-Asher E."/>
            <person name="Levy Z."/>
            <person name="Fainzilber M."/>
        </authorList>
    </citation>
    <scope>NUCLEOTIDE SEQUENCE [MRNA]</scope>
    <source>
        <tissue>Venom duct</tissue>
    </source>
</reference>
<organism>
    <name type="scientific">Conus pennaceus</name>
    <name type="common">Feathered cone</name>
    <name type="synonym">Conus episcopus</name>
    <dbReference type="NCBI Taxonomy" id="37335"/>
    <lineage>
        <taxon>Eukaryota</taxon>
        <taxon>Metazoa</taxon>
        <taxon>Spiralia</taxon>
        <taxon>Lophotrochozoa</taxon>
        <taxon>Mollusca</taxon>
        <taxon>Gastropoda</taxon>
        <taxon>Caenogastropoda</taxon>
        <taxon>Neogastropoda</taxon>
        <taxon>Conoidea</taxon>
        <taxon>Conidae</taxon>
        <taxon>Conus</taxon>
        <taxon>Darioconus</taxon>
    </lineage>
</organism>
<dbReference type="EMBL" id="AF215075">
    <property type="protein sequence ID" value="AAG60503.1"/>
    <property type="molecule type" value="mRNA"/>
</dbReference>
<dbReference type="SMR" id="Q9BP63"/>
<dbReference type="ConoServer" id="762">
    <property type="toxin name" value="Pn6.11 precursor"/>
</dbReference>
<dbReference type="GO" id="GO:0005576">
    <property type="term" value="C:extracellular region"/>
    <property type="evidence" value="ECO:0007669"/>
    <property type="project" value="UniProtKB-SubCell"/>
</dbReference>
<dbReference type="GO" id="GO:0008200">
    <property type="term" value="F:ion channel inhibitor activity"/>
    <property type="evidence" value="ECO:0007669"/>
    <property type="project" value="InterPro"/>
</dbReference>
<dbReference type="GO" id="GO:0090729">
    <property type="term" value="F:toxin activity"/>
    <property type="evidence" value="ECO:0007669"/>
    <property type="project" value="UniProtKB-KW"/>
</dbReference>
<dbReference type="InterPro" id="IPR004214">
    <property type="entry name" value="Conotoxin"/>
</dbReference>
<dbReference type="Pfam" id="PF02950">
    <property type="entry name" value="Conotoxin"/>
    <property type="match status" value="1"/>
</dbReference>
<accession>Q9BP63</accession>
<comment type="subcellular location">
    <subcellularLocation>
        <location evidence="1">Secreted</location>
    </subcellularLocation>
</comment>
<comment type="tissue specificity">
    <text>Expressed by the venom duct.</text>
</comment>
<comment type="domain">
    <text evidence="1">The presence of a 'disulfide through disulfide knot' structurally defines this protein as a knottin.</text>
</comment>
<comment type="domain">
    <text>The cysteine framework is VI/VII (C-C-CC-C-C).</text>
</comment>
<comment type="similarity">
    <text evidence="3">Belongs to the conotoxin O3 superfamily.</text>
</comment>
<keyword id="KW-0027">Amidation</keyword>
<keyword id="KW-0165">Cleavage on pair of basic residues</keyword>
<keyword id="KW-1015">Disulfide bond</keyword>
<keyword id="KW-0960">Knottin</keyword>
<keyword id="KW-0528">Neurotoxin</keyword>
<keyword id="KW-0964">Secreted</keyword>
<keyword id="KW-0732">Signal</keyword>
<keyword id="KW-0800">Toxin</keyword>
<feature type="signal peptide" evidence="2">
    <location>
        <begin position="1"/>
        <end position="20"/>
    </location>
</feature>
<feature type="propeptide" id="PRO_0000404836" evidence="1">
    <location>
        <begin position="21"/>
        <end position="44"/>
    </location>
</feature>
<feature type="peptide" id="PRO_0000404837" description="Conotoxin PnMSGL-03">
    <location>
        <begin position="47"/>
        <end position="78"/>
    </location>
</feature>
<feature type="modified residue" description="Leucine amide" evidence="1">
    <location>
        <position position="78"/>
    </location>
</feature>
<feature type="disulfide bond" evidence="1">
    <location>
        <begin position="52"/>
        <end position="64"/>
    </location>
</feature>
<feature type="disulfide bond" evidence="1">
    <location>
        <begin position="56"/>
        <end position="73"/>
    </location>
</feature>
<feature type="disulfide bond" evidence="1">
    <location>
        <begin position="63"/>
        <end position="77"/>
    </location>
</feature>
<protein>
    <recommendedName>
        <fullName>Conotoxin PnMSGL-03</fullName>
    </recommendedName>
</protein>
<evidence type="ECO:0000250" key="1"/>
<evidence type="ECO:0000255" key="2"/>
<evidence type="ECO:0000305" key="3"/>
<sequence>MSRLGIMVLTLLLLVFIVTSHQDAGEKQATQRDAINFRWRRSLIRRTATEECEEYCEDEEKTCCGLEDGEPVCATTCLG</sequence>